<name>YHJG_BACSU</name>
<proteinExistence type="inferred from homology"/>
<keyword id="KW-0058">Aromatic hydrocarbons catabolism</keyword>
<keyword id="KW-0274">FAD</keyword>
<keyword id="KW-0285">Flavoprotein</keyword>
<keyword id="KW-0503">Monooxygenase</keyword>
<keyword id="KW-0521">NADP</keyword>
<keyword id="KW-0560">Oxidoreductase</keyword>
<keyword id="KW-1185">Reference proteome</keyword>
<accession>O07561</accession>
<accession>Q796S5</accession>
<reference key="1">
    <citation type="journal article" date="1998" name="Microbiology">
        <title>The 172 kb prkA-addAB region from 83 degrees to 97 degrees of the Bacillus subtilis chromosome contains several dysfunctional genes, the glyB marker, many genes encoding transporter proteins, and the ubiquitous hit gene.</title>
        <authorList>
            <person name="Noback M.A."/>
            <person name="Holsappel S."/>
            <person name="Kiewiet R."/>
            <person name="Terpstra P."/>
            <person name="Wambutt R."/>
            <person name="Wedler H."/>
            <person name="Venema G."/>
            <person name="Bron S."/>
        </authorList>
    </citation>
    <scope>NUCLEOTIDE SEQUENCE [GENOMIC DNA]</scope>
    <source>
        <strain>168</strain>
    </source>
</reference>
<reference key="2">
    <citation type="journal article" date="1997" name="Nature">
        <title>The complete genome sequence of the Gram-positive bacterium Bacillus subtilis.</title>
        <authorList>
            <person name="Kunst F."/>
            <person name="Ogasawara N."/>
            <person name="Moszer I."/>
            <person name="Albertini A.M."/>
            <person name="Alloni G."/>
            <person name="Azevedo V."/>
            <person name="Bertero M.G."/>
            <person name="Bessieres P."/>
            <person name="Bolotin A."/>
            <person name="Borchert S."/>
            <person name="Borriss R."/>
            <person name="Boursier L."/>
            <person name="Brans A."/>
            <person name="Braun M."/>
            <person name="Brignell S.C."/>
            <person name="Bron S."/>
            <person name="Brouillet S."/>
            <person name="Bruschi C.V."/>
            <person name="Caldwell B."/>
            <person name="Capuano V."/>
            <person name="Carter N.M."/>
            <person name="Choi S.-K."/>
            <person name="Codani J.-J."/>
            <person name="Connerton I.F."/>
            <person name="Cummings N.J."/>
            <person name="Daniel R.A."/>
            <person name="Denizot F."/>
            <person name="Devine K.M."/>
            <person name="Duesterhoeft A."/>
            <person name="Ehrlich S.D."/>
            <person name="Emmerson P.T."/>
            <person name="Entian K.-D."/>
            <person name="Errington J."/>
            <person name="Fabret C."/>
            <person name="Ferrari E."/>
            <person name="Foulger D."/>
            <person name="Fritz C."/>
            <person name="Fujita M."/>
            <person name="Fujita Y."/>
            <person name="Fuma S."/>
            <person name="Galizzi A."/>
            <person name="Galleron N."/>
            <person name="Ghim S.-Y."/>
            <person name="Glaser P."/>
            <person name="Goffeau A."/>
            <person name="Golightly E.J."/>
            <person name="Grandi G."/>
            <person name="Guiseppi G."/>
            <person name="Guy B.J."/>
            <person name="Haga K."/>
            <person name="Haiech J."/>
            <person name="Harwood C.R."/>
            <person name="Henaut A."/>
            <person name="Hilbert H."/>
            <person name="Holsappel S."/>
            <person name="Hosono S."/>
            <person name="Hullo M.-F."/>
            <person name="Itaya M."/>
            <person name="Jones L.-M."/>
            <person name="Joris B."/>
            <person name="Karamata D."/>
            <person name="Kasahara Y."/>
            <person name="Klaerr-Blanchard M."/>
            <person name="Klein C."/>
            <person name="Kobayashi Y."/>
            <person name="Koetter P."/>
            <person name="Koningstein G."/>
            <person name="Krogh S."/>
            <person name="Kumano M."/>
            <person name="Kurita K."/>
            <person name="Lapidus A."/>
            <person name="Lardinois S."/>
            <person name="Lauber J."/>
            <person name="Lazarevic V."/>
            <person name="Lee S.-M."/>
            <person name="Levine A."/>
            <person name="Liu H."/>
            <person name="Masuda S."/>
            <person name="Mauel C."/>
            <person name="Medigue C."/>
            <person name="Medina N."/>
            <person name="Mellado R.P."/>
            <person name="Mizuno M."/>
            <person name="Moestl D."/>
            <person name="Nakai S."/>
            <person name="Noback M."/>
            <person name="Noone D."/>
            <person name="O'Reilly M."/>
            <person name="Ogawa K."/>
            <person name="Ogiwara A."/>
            <person name="Oudega B."/>
            <person name="Park S.-H."/>
            <person name="Parro V."/>
            <person name="Pohl T.M."/>
            <person name="Portetelle D."/>
            <person name="Porwollik S."/>
            <person name="Prescott A.M."/>
            <person name="Presecan E."/>
            <person name="Pujic P."/>
            <person name="Purnelle B."/>
            <person name="Rapoport G."/>
            <person name="Rey M."/>
            <person name="Reynolds S."/>
            <person name="Rieger M."/>
            <person name="Rivolta C."/>
            <person name="Rocha E."/>
            <person name="Roche B."/>
            <person name="Rose M."/>
            <person name="Sadaie Y."/>
            <person name="Sato T."/>
            <person name="Scanlan E."/>
            <person name="Schleich S."/>
            <person name="Schroeter R."/>
            <person name="Scoffone F."/>
            <person name="Sekiguchi J."/>
            <person name="Sekowska A."/>
            <person name="Seror S.J."/>
            <person name="Serror P."/>
            <person name="Shin B.-S."/>
            <person name="Soldo B."/>
            <person name="Sorokin A."/>
            <person name="Tacconi E."/>
            <person name="Takagi T."/>
            <person name="Takahashi H."/>
            <person name="Takemaru K."/>
            <person name="Takeuchi M."/>
            <person name="Tamakoshi A."/>
            <person name="Tanaka T."/>
            <person name="Terpstra P."/>
            <person name="Tognoni A."/>
            <person name="Tosato V."/>
            <person name="Uchiyama S."/>
            <person name="Vandenbol M."/>
            <person name="Vannier F."/>
            <person name="Vassarotti A."/>
            <person name="Viari A."/>
            <person name="Wambutt R."/>
            <person name="Wedler E."/>
            <person name="Wedler H."/>
            <person name="Weitzenegger T."/>
            <person name="Winters P."/>
            <person name="Wipat A."/>
            <person name="Yamamoto H."/>
            <person name="Yamane K."/>
            <person name="Yasumoto K."/>
            <person name="Yata K."/>
            <person name="Yoshida K."/>
            <person name="Yoshikawa H.-F."/>
            <person name="Zumstein E."/>
            <person name="Yoshikawa H."/>
            <person name="Danchin A."/>
        </authorList>
    </citation>
    <scope>NUCLEOTIDE SEQUENCE [LARGE SCALE GENOMIC DNA]</scope>
    <source>
        <strain>168</strain>
    </source>
</reference>
<evidence type="ECO:0000250" key="1"/>
<evidence type="ECO:0000305" key="2"/>
<protein>
    <recommendedName>
        <fullName>Uncharacterized aromatic compound monooxygenase YhjG</fullName>
        <ecNumber>1.14.13.-</ecNumber>
    </recommendedName>
</protein>
<dbReference type="EC" id="1.14.13.-"/>
<dbReference type="EMBL" id="Y14081">
    <property type="protein sequence ID" value="CAA74469.1"/>
    <property type="molecule type" value="Genomic_DNA"/>
</dbReference>
<dbReference type="EMBL" id="AL009126">
    <property type="protein sequence ID" value="CAB12890.1"/>
    <property type="molecule type" value="Genomic_DNA"/>
</dbReference>
<dbReference type="PIR" id="F69833">
    <property type="entry name" value="F69833"/>
</dbReference>
<dbReference type="RefSeq" id="NP_388931.1">
    <property type="nucleotide sequence ID" value="NC_000964.3"/>
</dbReference>
<dbReference type="RefSeq" id="WP_003245274.1">
    <property type="nucleotide sequence ID" value="NZ_OZ025638.1"/>
</dbReference>
<dbReference type="SMR" id="O07561"/>
<dbReference type="FunCoup" id="O07561">
    <property type="interactions" value="543"/>
</dbReference>
<dbReference type="STRING" id="224308.BSU10500"/>
<dbReference type="PaxDb" id="224308-BSU10500"/>
<dbReference type="EnsemblBacteria" id="CAB12890">
    <property type="protein sequence ID" value="CAB12890"/>
    <property type="gene ID" value="BSU_10500"/>
</dbReference>
<dbReference type="GeneID" id="936325"/>
<dbReference type="KEGG" id="bsu:BSU10500"/>
<dbReference type="PATRIC" id="fig|224308.43.peg.1095"/>
<dbReference type="eggNOG" id="COG0654">
    <property type="taxonomic scope" value="Bacteria"/>
</dbReference>
<dbReference type="InParanoid" id="O07561"/>
<dbReference type="OrthoDB" id="9766816at2"/>
<dbReference type="PhylomeDB" id="O07561"/>
<dbReference type="BioCyc" id="BSUB:BSU10500-MONOMER"/>
<dbReference type="Proteomes" id="UP000001570">
    <property type="component" value="Chromosome"/>
</dbReference>
<dbReference type="GO" id="GO:0071949">
    <property type="term" value="F:FAD binding"/>
    <property type="evidence" value="ECO:0007669"/>
    <property type="project" value="InterPro"/>
</dbReference>
<dbReference type="GO" id="GO:0016491">
    <property type="term" value="F:oxidoreductase activity"/>
    <property type="evidence" value="ECO:0000318"/>
    <property type="project" value="GO_Central"/>
</dbReference>
<dbReference type="GO" id="GO:0016709">
    <property type="term" value="F:oxidoreductase activity, acting on paired donors, with incorporation or reduction of molecular oxygen, NAD(P)H as one donor, and incorporation of one atom of oxygen"/>
    <property type="evidence" value="ECO:0007669"/>
    <property type="project" value="UniProtKB-ARBA"/>
</dbReference>
<dbReference type="GO" id="GO:0009056">
    <property type="term" value="P:catabolic process"/>
    <property type="evidence" value="ECO:0007669"/>
    <property type="project" value="UniProtKB-KW"/>
</dbReference>
<dbReference type="Gene3D" id="3.30.70.2450">
    <property type="match status" value="1"/>
</dbReference>
<dbReference type="Gene3D" id="3.40.30.120">
    <property type="match status" value="1"/>
</dbReference>
<dbReference type="Gene3D" id="3.50.50.60">
    <property type="entry name" value="FAD/NAD(P)-binding domain"/>
    <property type="match status" value="1"/>
</dbReference>
<dbReference type="InterPro" id="IPR002938">
    <property type="entry name" value="FAD-bd"/>
</dbReference>
<dbReference type="InterPro" id="IPR036188">
    <property type="entry name" value="FAD/NAD-bd_sf"/>
</dbReference>
<dbReference type="InterPro" id="IPR050641">
    <property type="entry name" value="RIFMO-like"/>
</dbReference>
<dbReference type="NCBIfam" id="NF006092">
    <property type="entry name" value="PRK08244.1"/>
    <property type="match status" value="1"/>
</dbReference>
<dbReference type="PANTHER" id="PTHR43004:SF19">
    <property type="entry name" value="BINDING MONOOXYGENASE, PUTATIVE (JCVI)-RELATED"/>
    <property type="match status" value="1"/>
</dbReference>
<dbReference type="PANTHER" id="PTHR43004">
    <property type="entry name" value="TRK SYSTEM POTASSIUM UPTAKE PROTEIN"/>
    <property type="match status" value="1"/>
</dbReference>
<dbReference type="Pfam" id="PF01494">
    <property type="entry name" value="FAD_binding_3"/>
    <property type="match status" value="1"/>
</dbReference>
<dbReference type="Pfam" id="PF21274">
    <property type="entry name" value="Rng_hyd_C"/>
    <property type="match status" value="1"/>
</dbReference>
<dbReference type="PRINTS" id="PR00420">
    <property type="entry name" value="RNGMNOXGNASE"/>
</dbReference>
<dbReference type="SUPFAM" id="SSF51905">
    <property type="entry name" value="FAD/NAD(P)-binding domain"/>
    <property type="match status" value="1"/>
</dbReference>
<gene>
    <name type="primary">yhjG</name>
    <name type="ordered locus">BSU10500</name>
</gene>
<sequence>MMMKYEAVIIGGGPVGFMLASELAIAGVGTCVIERLEKPVPHSKALTLHPRTLELLEMRGILERFVSKGSKIPTGHFSMLDTRLDFSGLDTSCPYTLLLPQSKTEKLLEDHARSLGTEVFRGAEALAVTQNGEAVQTIFKDRDGSVRTITSKFAVGADGAGSTVRKQAKIEFPGTDSTVTAALGDVVLLSPPPSGVLSLCTKEGGVMIVPLSPDRYRVVVISPYRTQTPKDVPVTEEELKADLLRICGTDFGLTDPSWMSRFGNAARQAKRYRDGRIFLAGDAAHIHFPAGGQGLNVGLQDAMNLGWKLAAAIKGSAPSWLLDSYHDERHPAAEGLLRNTEAQTKLIDFTQAGLHLRSMMSELLAFPDVNRYVAGQISALDVRYEADRTMPPNRLNGARLPDMKLILSDGNSERLYSFLQNGTFVLLSLRQEADDHIEVKGLRTVTASLAEPNEKLRNVHTILIRPDGHVAWAVDASAPDCSEVIQKGISRWFSVTSRV</sequence>
<comment type="cofactor">
    <cofactor evidence="1">
        <name>FAD</name>
        <dbReference type="ChEBI" id="CHEBI:57692"/>
    </cofactor>
</comment>
<comment type="similarity">
    <text evidence="2">Belongs to the PheA/TfdB FAD monooxygenase family.</text>
</comment>
<feature type="chain" id="PRO_0000387990" description="Uncharacterized aromatic compound monooxygenase YhjG">
    <location>
        <begin position="1"/>
        <end position="499"/>
    </location>
</feature>
<feature type="binding site" evidence="1">
    <location>
        <begin position="6"/>
        <end position="35"/>
    </location>
    <ligand>
        <name>FAD</name>
        <dbReference type="ChEBI" id="CHEBI:57692"/>
    </ligand>
</feature>
<feature type="binding site" evidence="1">
    <location>
        <begin position="272"/>
        <end position="282"/>
    </location>
    <ligand>
        <name>FAD</name>
        <dbReference type="ChEBI" id="CHEBI:57692"/>
    </ligand>
</feature>
<organism>
    <name type="scientific">Bacillus subtilis (strain 168)</name>
    <dbReference type="NCBI Taxonomy" id="224308"/>
    <lineage>
        <taxon>Bacteria</taxon>
        <taxon>Bacillati</taxon>
        <taxon>Bacillota</taxon>
        <taxon>Bacilli</taxon>
        <taxon>Bacillales</taxon>
        <taxon>Bacillaceae</taxon>
        <taxon>Bacillus</taxon>
    </lineage>
</organism>